<evidence type="ECO:0000255" key="1">
    <source>
        <dbReference type="HAMAP-Rule" id="MF_01363"/>
    </source>
</evidence>
<evidence type="ECO:0000305" key="2"/>
<sequence>MYAIIATGGKQYTVSEGDTIRVEKLAVNAGDTVTFDQVLFVNNGEAKVGEPTVAGATVTASVVGEGRDKKVIVYKYKRKTGYHKKNGHRQAYTEVKIEKINA</sequence>
<proteinExistence type="inferred from homology"/>
<name>RL21_LACE2</name>
<organism>
    <name type="scientific">Lachnospira eligens (strain ATCC 27750 / DSM 3376 / VPI C15-48 / C15-B4)</name>
    <name type="common">Eubacterium eligens</name>
    <dbReference type="NCBI Taxonomy" id="515620"/>
    <lineage>
        <taxon>Bacteria</taxon>
        <taxon>Bacillati</taxon>
        <taxon>Bacillota</taxon>
        <taxon>Clostridia</taxon>
        <taxon>Lachnospirales</taxon>
        <taxon>Lachnospiraceae</taxon>
        <taxon>Lachnospira</taxon>
    </lineage>
</organism>
<reference key="1">
    <citation type="journal article" date="2009" name="Proc. Natl. Acad. Sci. U.S.A.">
        <title>Characterizing a model human gut microbiota composed of members of its two dominant bacterial phyla.</title>
        <authorList>
            <person name="Mahowald M.A."/>
            <person name="Rey F.E."/>
            <person name="Seedorf H."/>
            <person name="Turnbaugh P.J."/>
            <person name="Fulton R.S."/>
            <person name="Wollam A."/>
            <person name="Shah N."/>
            <person name="Wang C."/>
            <person name="Magrini V."/>
            <person name="Wilson R.K."/>
            <person name="Cantarel B.L."/>
            <person name="Coutinho P.M."/>
            <person name="Henrissat B."/>
            <person name="Crock L.W."/>
            <person name="Russell A."/>
            <person name="Verberkmoes N.C."/>
            <person name="Hettich R.L."/>
            <person name="Gordon J.I."/>
        </authorList>
    </citation>
    <scope>NUCLEOTIDE SEQUENCE [LARGE SCALE GENOMIC DNA]</scope>
    <source>
        <strain>ATCC 27750 / DSM 3376 / VPI C15-48 / C15-B4</strain>
    </source>
</reference>
<dbReference type="EMBL" id="CP001104">
    <property type="protein sequence ID" value="ACR72018.1"/>
    <property type="molecule type" value="Genomic_DNA"/>
</dbReference>
<dbReference type="RefSeq" id="WP_012739253.1">
    <property type="nucleotide sequence ID" value="NC_012778.1"/>
</dbReference>
<dbReference type="SMR" id="C4Z0A5"/>
<dbReference type="STRING" id="515620.EUBELI_01017"/>
<dbReference type="GeneID" id="41355744"/>
<dbReference type="KEGG" id="eel:EUBELI_01017"/>
<dbReference type="eggNOG" id="COG0261">
    <property type="taxonomic scope" value="Bacteria"/>
</dbReference>
<dbReference type="HOGENOM" id="CLU_061463_3_2_9"/>
<dbReference type="Proteomes" id="UP000001476">
    <property type="component" value="Chromosome"/>
</dbReference>
<dbReference type="GO" id="GO:0005737">
    <property type="term" value="C:cytoplasm"/>
    <property type="evidence" value="ECO:0007669"/>
    <property type="project" value="UniProtKB-ARBA"/>
</dbReference>
<dbReference type="GO" id="GO:1990904">
    <property type="term" value="C:ribonucleoprotein complex"/>
    <property type="evidence" value="ECO:0007669"/>
    <property type="project" value="UniProtKB-KW"/>
</dbReference>
<dbReference type="GO" id="GO:0005840">
    <property type="term" value="C:ribosome"/>
    <property type="evidence" value="ECO:0007669"/>
    <property type="project" value="UniProtKB-KW"/>
</dbReference>
<dbReference type="GO" id="GO:0019843">
    <property type="term" value="F:rRNA binding"/>
    <property type="evidence" value="ECO:0007669"/>
    <property type="project" value="UniProtKB-UniRule"/>
</dbReference>
<dbReference type="GO" id="GO:0003735">
    <property type="term" value="F:structural constituent of ribosome"/>
    <property type="evidence" value="ECO:0007669"/>
    <property type="project" value="InterPro"/>
</dbReference>
<dbReference type="GO" id="GO:0006412">
    <property type="term" value="P:translation"/>
    <property type="evidence" value="ECO:0007669"/>
    <property type="project" value="UniProtKB-UniRule"/>
</dbReference>
<dbReference type="HAMAP" id="MF_01363">
    <property type="entry name" value="Ribosomal_bL21"/>
    <property type="match status" value="1"/>
</dbReference>
<dbReference type="InterPro" id="IPR028909">
    <property type="entry name" value="bL21-like"/>
</dbReference>
<dbReference type="InterPro" id="IPR036164">
    <property type="entry name" value="bL21-like_sf"/>
</dbReference>
<dbReference type="InterPro" id="IPR001787">
    <property type="entry name" value="Ribosomal_bL21"/>
</dbReference>
<dbReference type="InterPro" id="IPR018258">
    <property type="entry name" value="Ribosomal_bL21_CS"/>
</dbReference>
<dbReference type="NCBIfam" id="TIGR00061">
    <property type="entry name" value="L21"/>
    <property type="match status" value="1"/>
</dbReference>
<dbReference type="PANTHER" id="PTHR21349">
    <property type="entry name" value="50S RIBOSOMAL PROTEIN L21"/>
    <property type="match status" value="1"/>
</dbReference>
<dbReference type="PANTHER" id="PTHR21349:SF0">
    <property type="entry name" value="LARGE RIBOSOMAL SUBUNIT PROTEIN BL21M"/>
    <property type="match status" value="1"/>
</dbReference>
<dbReference type="Pfam" id="PF00829">
    <property type="entry name" value="Ribosomal_L21p"/>
    <property type="match status" value="1"/>
</dbReference>
<dbReference type="SUPFAM" id="SSF141091">
    <property type="entry name" value="L21p-like"/>
    <property type="match status" value="1"/>
</dbReference>
<dbReference type="PROSITE" id="PS01169">
    <property type="entry name" value="RIBOSOMAL_L21"/>
    <property type="match status" value="1"/>
</dbReference>
<protein>
    <recommendedName>
        <fullName evidence="1">Large ribosomal subunit protein bL21</fullName>
    </recommendedName>
    <alternativeName>
        <fullName evidence="2">50S ribosomal protein L21</fullName>
    </alternativeName>
</protein>
<accession>C4Z0A5</accession>
<comment type="function">
    <text evidence="1">This protein binds to 23S rRNA in the presence of protein L20.</text>
</comment>
<comment type="subunit">
    <text evidence="1">Part of the 50S ribosomal subunit. Contacts protein L20.</text>
</comment>
<comment type="similarity">
    <text evidence="1">Belongs to the bacterial ribosomal protein bL21 family.</text>
</comment>
<gene>
    <name evidence="1" type="primary">rplU</name>
    <name type="ordered locus">EUBELI_01017</name>
</gene>
<feature type="chain" id="PRO_1000214889" description="Large ribosomal subunit protein bL21">
    <location>
        <begin position="1"/>
        <end position="102"/>
    </location>
</feature>
<keyword id="KW-1185">Reference proteome</keyword>
<keyword id="KW-0687">Ribonucleoprotein</keyword>
<keyword id="KW-0689">Ribosomal protein</keyword>
<keyword id="KW-0694">RNA-binding</keyword>
<keyword id="KW-0699">rRNA-binding</keyword>